<gene>
    <name evidence="1" type="primary">ribH</name>
    <name type="ordered locus">LS215_1831</name>
</gene>
<reference key="1">
    <citation type="journal article" date="2009" name="Proc. Natl. Acad. Sci. U.S.A.">
        <title>Biogeography of the Sulfolobus islandicus pan-genome.</title>
        <authorList>
            <person name="Reno M.L."/>
            <person name="Held N.L."/>
            <person name="Fields C.J."/>
            <person name="Burke P.V."/>
            <person name="Whitaker R.J."/>
        </authorList>
    </citation>
    <scope>NUCLEOTIDE SEQUENCE [LARGE SCALE GENOMIC DNA]</scope>
    <source>
        <strain>L.S.2.15 / Lassen #1</strain>
    </source>
</reference>
<name>RISB_SACI2</name>
<sequence length="154" mass="17163">MQEKSIRLGIVVAEFNYDITQLMLQKALSHAKFLNAEVKVVIKVPGTFDMPLAIKKLLEKDFIDAVVTLGAVIKGETKHDEIVASQTARKIVDLSTEFNKPVTLGIIGHGATHEQAVERIEEYATRAVEAAIKLVQRTRKIDELKEVKETVIID</sequence>
<protein>
    <recommendedName>
        <fullName evidence="1">6,7-dimethyl-8-ribityllumazine synthase</fullName>
        <shortName evidence="1">DMRL synthase</shortName>
        <shortName evidence="1">LS</shortName>
        <shortName evidence="1">Lumazine synthase</shortName>
        <ecNumber evidence="1">2.5.1.78</ecNumber>
    </recommendedName>
</protein>
<accession>C3MR14</accession>
<organism>
    <name type="scientific">Saccharolobus islandicus (strain L.S.2.15 / Lassen #1)</name>
    <name type="common">Sulfolobus islandicus</name>
    <dbReference type="NCBI Taxonomy" id="429572"/>
    <lineage>
        <taxon>Archaea</taxon>
        <taxon>Thermoproteota</taxon>
        <taxon>Thermoprotei</taxon>
        <taxon>Sulfolobales</taxon>
        <taxon>Sulfolobaceae</taxon>
        <taxon>Saccharolobus</taxon>
    </lineage>
</organism>
<feature type="chain" id="PRO_1000203802" description="6,7-dimethyl-8-ribityllumazine synthase">
    <location>
        <begin position="1"/>
        <end position="154"/>
    </location>
</feature>
<feature type="active site" description="Proton donor" evidence="1">
    <location>
        <position position="79"/>
    </location>
</feature>
<feature type="binding site" evidence="1">
    <location>
        <position position="15"/>
    </location>
    <ligand>
        <name>5-amino-6-(D-ribitylamino)uracil</name>
        <dbReference type="ChEBI" id="CHEBI:15934"/>
    </ligand>
</feature>
<feature type="binding site" evidence="1">
    <location>
        <begin position="47"/>
        <end position="49"/>
    </location>
    <ligand>
        <name>5-amino-6-(D-ribitylamino)uracil</name>
        <dbReference type="ChEBI" id="CHEBI:15934"/>
    </ligand>
</feature>
<feature type="binding site" evidence="1">
    <location>
        <begin position="71"/>
        <end position="73"/>
    </location>
    <ligand>
        <name>5-amino-6-(D-ribitylamino)uracil</name>
        <dbReference type="ChEBI" id="CHEBI:15934"/>
    </ligand>
</feature>
<feature type="binding site" evidence="1">
    <location>
        <begin position="76"/>
        <end position="77"/>
    </location>
    <ligand>
        <name>(2S)-2-hydroxy-3-oxobutyl phosphate</name>
        <dbReference type="ChEBI" id="CHEBI:58830"/>
    </ligand>
</feature>
<feature type="binding site" evidence="1">
    <location>
        <position position="104"/>
    </location>
    <ligand>
        <name>5-amino-6-(D-ribitylamino)uracil</name>
        <dbReference type="ChEBI" id="CHEBI:15934"/>
    </ligand>
</feature>
<feature type="binding site" evidence="1">
    <location>
        <position position="119"/>
    </location>
    <ligand>
        <name>(2S)-2-hydroxy-3-oxobutyl phosphate</name>
        <dbReference type="ChEBI" id="CHEBI:58830"/>
    </ligand>
</feature>
<comment type="function">
    <text evidence="1">Catalyzes the formation of 6,7-dimethyl-8-ribityllumazine by condensation of 5-amino-6-(D-ribitylamino)uracil with 3,4-dihydroxy-2-butanone 4-phosphate. This is the penultimate step in the biosynthesis of riboflavin.</text>
</comment>
<comment type="catalytic activity">
    <reaction evidence="1">
        <text>(2S)-2-hydroxy-3-oxobutyl phosphate + 5-amino-6-(D-ribitylamino)uracil = 6,7-dimethyl-8-(1-D-ribityl)lumazine + phosphate + 2 H2O + H(+)</text>
        <dbReference type="Rhea" id="RHEA:26152"/>
        <dbReference type="ChEBI" id="CHEBI:15377"/>
        <dbReference type="ChEBI" id="CHEBI:15378"/>
        <dbReference type="ChEBI" id="CHEBI:15934"/>
        <dbReference type="ChEBI" id="CHEBI:43474"/>
        <dbReference type="ChEBI" id="CHEBI:58201"/>
        <dbReference type="ChEBI" id="CHEBI:58830"/>
        <dbReference type="EC" id="2.5.1.78"/>
    </reaction>
</comment>
<comment type="pathway">
    <text evidence="1">Cofactor biosynthesis; riboflavin biosynthesis; riboflavin from 2-hydroxy-3-oxobutyl phosphate and 5-amino-6-(D-ribitylamino)uracil: step 1/2.</text>
</comment>
<comment type="similarity">
    <text evidence="1">Belongs to the DMRL synthase family.</text>
</comment>
<proteinExistence type="inferred from homology"/>
<keyword id="KW-0686">Riboflavin biosynthesis</keyword>
<keyword id="KW-0808">Transferase</keyword>
<dbReference type="EC" id="2.5.1.78" evidence="1"/>
<dbReference type="EMBL" id="CP001399">
    <property type="protein sequence ID" value="ACP35827.1"/>
    <property type="molecule type" value="Genomic_DNA"/>
</dbReference>
<dbReference type="RefSeq" id="WP_012713917.1">
    <property type="nucleotide sequence ID" value="NC_012589.1"/>
</dbReference>
<dbReference type="SMR" id="C3MR14"/>
<dbReference type="GeneID" id="7810838"/>
<dbReference type="KEGG" id="sis:LS215_1831"/>
<dbReference type="HOGENOM" id="CLU_089358_3_1_2"/>
<dbReference type="OrthoDB" id="7610at2157"/>
<dbReference type="UniPathway" id="UPA00275">
    <property type="reaction ID" value="UER00404"/>
</dbReference>
<dbReference type="Proteomes" id="UP000001747">
    <property type="component" value="Chromosome"/>
</dbReference>
<dbReference type="GO" id="GO:0009349">
    <property type="term" value="C:riboflavin synthase complex"/>
    <property type="evidence" value="ECO:0007669"/>
    <property type="project" value="InterPro"/>
</dbReference>
<dbReference type="GO" id="GO:0000906">
    <property type="term" value="F:6,7-dimethyl-8-ribityllumazine synthase activity"/>
    <property type="evidence" value="ECO:0007669"/>
    <property type="project" value="UniProtKB-UniRule"/>
</dbReference>
<dbReference type="GO" id="GO:0009231">
    <property type="term" value="P:riboflavin biosynthetic process"/>
    <property type="evidence" value="ECO:0007669"/>
    <property type="project" value="UniProtKB-UniRule"/>
</dbReference>
<dbReference type="CDD" id="cd09211">
    <property type="entry name" value="Lumazine_synthase_archaeal"/>
    <property type="match status" value="1"/>
</dbReference>
<dbReference type="FunFam" id="3.40.50.960:FF:000003">
    <property type="entry name" value="6,7-dimethyl-8-ribityllumazine synthase"/>
    <property type="match status" value="1"/>
</dbReference>
<dbReference type="Gene3D" id="3.40.50.960">
    <property type="entry name" value="Lumazine/riboflavin synthase"/>
    <property type="match status" value="1"/>
</dbReference>
<dbReference type="HAMAP" id="MF_00178">
    <property type="entry name" value="Lumazine_synth"/>
    <property type="match status" value="1"/>
</dbReference>
<dbReference type="InterPro" id="IPR034964">
    <property type="entry name" value="LS"/>
</dbReference>
<dbReference type="InterPro" id="IPR002180">
    <property type="entry name" value="LS/RS"/>
</dbReference>
<dbReference type="InterPro" id="IPR036467">
    <property type="entry name" value="LS/RS_sf"/>
</dbReference>
<dbReference type="NCBIfam" id="TIGR00114">
    <property type="entry name" value="lumazine-synth"/>
    <property type="match status" value="1"/>
</dbReference>
<dbReference type="PANTHER" id="PTHR21058:SF0">
    <property type="entry name" value="6,7-DIMETHYL-8-RIBITYLLUMAZINE SYNTHASE"/>
    <property type="match status" value="1"/>
</dbReference>
<dbReference type="PANTHER" id="PTHR21058">
    <property type="entry name" value="6,7-DIMETHYL-8-RIBITYLLUMAZINE SYNTHASE DMRL SYNTHASE LUMAZINE SYNTHASE"/>
    <property type="match status" value="1"/>
</dbReference>
<dbReference type="Pfam" id="PF00885">
    <property type="entry name" value="DMRL_synthase"/>
    <property type="match status" value="1"/>
</dbReference>
<dbReference type="SUPFAM" id="SSF52121">
    <property type="entry name" value="Lumazine synthase"/>
    <property type="match status" value="1"/>
</dbReference>
<evidence type="ECO:0000255" key="1">
    <source>
        <dbReference type="HAMAP-Rule" id="MF_00178"/>
    </source>
</evidence>